<comment type="function">
    <text evidence="1">Necessary for normal cell division and for the maintenance of normal septation.</text>
</comment>
<comment type="cofactor">
    <cofactor evidence="1">
        <name>Mg(2+)</name>
        <dbReference type="ChEBI" id="CHEBI:18420"/>
    </cofactor>
</comment>
<comment type="similarity">
    <text evidence="1">Belongs to the TRAFAC class TrmE-Era-EngA-EngB-Septin-like GTPase superfamily. EngB GTPase family.</text>
</comment>
<organism>
    <name type="scientific">Staphylococcus aureus (strain NCTC 8325 / PS 47)</name>
    <dbReference type="NCBI Taxonomy" id="93061"/>
    <lineage>
        <taxon>Bacteria</taxon>
        <taxon>Bacillati</taxon>
        <taxon>Bacillota</taxon>
        <taxon>Bacilli</taxon>
        <taxon>Bacillales</taxon>
        <taxon>Staphylococcaceae</taxon>
        <taxon>Staphylococcus</taxon>
    </lineage>
</organism>
<reference key="1">
    <citation type="book" date="2006" name="Gram positive pathogens, 2nd edition">
        <title>The Staphylococcus aureus NCTC 8325 genome.</title>
        <editorList>
            <person name="Fischetti V."/>
            <person name="Novick R."/>
            <person name="Ferretti J."/>
            <person name="Portnoy D."/>
            <person name="Rood J."/>
        </editorList>
        <authorList>
            <person name="Gillaspy A.F."/>
            <person name="Worrell V."/>
            <person name="Orvis J."/>
            <person name="Roe B.A."/>
            <person name="Dyer D.W."/>
            <person name="Iandolo J.J."/>
        </authorList>
    </citation>
    <scope>NUCLEOTIDE SEQUENCE [LARGE SCALE GENOMIC DNA]</scope>
    <source>
        <strain>NCTC 8325 / PS 47</strain>
    </source>
</reference>
<evidence type="ECO:0000255" key="1">
    <source>
        <dbReference type="HAMAP-Rule" id="MF_00321"/>
    </source>
</evidence>
<keyword id="KW-0002">3D-structure</keyword>
<keyword id="KW-0131">Cell cycle</keyword>
<keyword id="KW-0132">Cell division</keyword>
<keyword id="KW-0342">GTP-binding</keyword>
<keyword id="KW-0460">Magnesium</keyword>
<keyword id="KW-0479">Metal-binding</keyword>
<keyword id="KW-0547">Nucleotide-binding</keyword>
<keyword id="KW-1185">Reference proteome</keyword>
<keyword id="KW-0717">Septation</keyword>
<name>ENGB_STAA8</name>
<accession>Q2FXQ8</accession>
<proteinExistence type="evidence at protein level"/>
<protein>
    <recommendedName>
        <fullName evidence="1">Probable GTP-binding protein EngB</fullName>
    </recommendedName>
</protein>
<feature type="chain" id="PRO_0000266956" description="Probable GTP-binding protein EngB">
    <location>
        <begin position="1"/>
        <end position="196"/>
    </location>
</feature>
<feature type="domain" description="EngB-type G" evidence="1">
    <location>
        <begin position="24"/>
        <end position="196"/>
    </location>
</feature>
<feature type="binding site" evidence="1">
    <location>
        <begin position="32"/>
        <end position="39"/>
    </location>
    <ligand>
        <name>GTP</name>
        <dbReference type="ChEBI" id="CHEBI:37565"/>
    </ligand>
</feature>
<feature type="binding site" evidence="1">
    <location>
        <position position="39"/>
    </location>
    <ligand>
        <name>Mg(2+)</name>
        <dbReference type="ChEBI" id="CHEBI:18420"/>
    </ligand>
</feature>
<feature type="binding site" evidence="1">
    <location>
        <begin position="59"/>
        <end position="63"/>
    </location>
    <ligand>
        <name>GTP</name>
        <dbReference type="ChEBI" id="CHEBI:37565"/>
    </ligand>
</feature>
<feature type="binding site" evidence="1">
    <location>
        <position position="61"/>
    </location>
    <ligand>
        <name>Mg(2+)</name>
        <dbReference type="ChEBI" id="CHEBI:18420"/>
    </ligand>
</feature>
<feature type="binding site" evidence="1">
    <location>
        <begin position="77"/>
        <end position="80"/>
    </location>
    <ligand>
        <name>GTP</name>
        <dbReference type="ChEBI" id="CHEBI:37565"/>
    </ligand>
</feature>
<feature type="binding site" evidence="1">
    <location>
        <begin position="144"/>
        <end position="147"/>
    </location>
    <ligand>
        <name>GTP</name>
        <dbReference type="ChEBI" id="CHEBI:37565"/>
    </ligand>
</feature>
<feature type="binding site" evidence="1">
    <location>
        <begin position="176"/>
        <end position="178"/>
    </location>
    <ligand>
        <name>GTP</name>
        <dbReference type="ChEBI" id="CHEBI:37565"/>
    </ligand>
</feature>
<sequence>MKVNPNNIELIISAVKEEQYPETELSEVALSGRSNVGKSTFINSMIGRKNMARTSQQPGKTQTLNFYNIDEQLIFVDVPGYGYAKVSKTQREKFGKMIEEYITKRENLQLVIQLVDLRHDPTQDDILMYNYLKHFDIPTLVICTKEDKIPKGKVQKHIKNIKTQLDMDPDDTIVSYSSIQNNKQQQIWNLIEPYIS</sequence>
<dbReference type="EMBL" id="CP000253">
    <property type="protein sequence ID" value="ABD30846.1"/>
    <property type="molecule type" value="Genomic_DNA"/>
</dbReference>
<dbReference type="RefSeq" id="YP_500282.1">
    <property type="nucleotide sequence ID" value="NC_007795.1"/>
</dbReference>
<dbReference type="PDB" id="8QUA">
    <property type="method" value="X-ray"/>
    <property type="resolution" value="2.00 A"/>
    <property type="chains" value="A=1-196"/>
</dbReference>
<dbReference type="PDBsum" id="8QUA"/>
<dbReference type="SMR" id="Q2FXQ8"/>
<dbReference type="STRING" id="93061.SAOUHSC_01777"/>
<dbReference type="PaxDb" id="1280-SAXN108_1700"/>
<dbReference type="GeneID" id="3919695"/>
<dbReference type="KEGG" id="sao:SAOUHSC_01777"/>
<dbReference type="PATRIC" id="fig|93061.5.peg.1621"/>
<dbReference type="eggNOG" id="COG0218">
    <property type="taxonomic scope" value="Bacteria"/>
</dbReference>
<dbReference type="HOGENOM" id="CLU_033732_3_0_9"/>
<dbReference type="OrthoDB" id="9804921at2"/>
<dbReference type="PRO" id="PR:Q2FXQ8"/>
<dbReference type="Proteomes" id="UP000008816">
    <property type="component" value="Chromosome"/>
</dbReference>
<dbReference type="GO" id="GO:0005829">
    <property type="term" value="C:cytosol"/>
    <property type="evidence" value="ECO:0000318"/>
    <property type="project" value="GO_Central"/>
</dbReference>
<dbReference type="GO" id="GO:0005525">
    <property type="term" value="F:GTP binding"/>
    <property type="evidence" value="ECO:0007669"/>
    <property type="project" value="UniProtKB-UniRule"/>
</dbReference>
<dbReference type="GO" id="GO:0046872">
    <property type="term" value="F:metal ion binding"/>
    <property type="evidence" value="ECO:0007669"/>
    <property type="project" value="UniProtKB-KW"/>
</dbReference>
<dbReference type="GO" id="GO:0000917">
    <property type="term" value="P:division septum assembly"/>
    <property type="evidence" value="ECO:0007669"/>
    <property type="project" value="UniProtKB-KW"/>
</dbReference>
<dbReference type="CDD" id="cd01876">
    <property type="entry name" value="YihA_EngB"/>
    <property type="match status" value="1"/>
</dbReference>
<dbReference type="FunFam" id="3.40.50.300:FF:000098">
    <property type="entry name" value="Probable GTP-binding protein EngB"/>
    <property type="match status" value="1"/>
</dbReference>
<dbReference type="Gene3D" id="3.40.50.300">
    <property type="entry name" value="P-loop containing nucleotide triphosphate hydrolases"/>
    <property type="match status" value="1"/>
</dbReference>
<dbReference type="HAMAP" id="MF_00321">
    <property type="entry name" value="GTPase_EngB"/>
    <property type="match status" value="1"/>
</dbReference>
<dbReference type="InterPro" id="IPR030393">
    <property type="entry name" value="G_ENGB_dom"/>
</dbReference>
<dbReference type="InterPro" id="IPR006073">
    <property type="entry name" value="GTP-bd"/>
</dbReference>
<dbReference type="InterPro" id="IPR019987">
    <property type="entry name" value="GTP-bd_ribosome_bio_YsxC"/>
</dbReference>
<dbReference type="InterPro" id="IPR027417">
    <property type="entry name" value="P-loop_NTPase"/>
</dbReference>
<dbReference type="NCBIfam" id="TIGR03598">
    <property type="entry name" value="GTPase_YsxC"/>
    <property type="match status" value="1"/>
</dbReference>
<dbReference type="PANTHER" id="PTHR11649:SF13">
    <property type="entry name" value="ENGB-TYPE G DOMAIN-CONTAINING PROTEIN"/>
    <property type="match status" value="1"/>
</dbReference>
<dbReference type="PANTHER" id="PTHR11649">
    <property type="entry name" value="MSS1/TRME-RELATED GTP-BINDING PROTEIN"/>
    <property type="match status" value="1"/>
</dbReference>
<dbReference type="Pfam" id="PF01926">
    <property type="entry name" value="MMR_HSR1"/>
    <property type="match status" value="1"/>
</dbReference>
<dbReference type="SUPFAM" id="SSF52540">
    <property type="entry name" value="P-loop containing nucleoside triphosphate hydrolases"/>
    <property type="match status" value="1"/>
</dbReference>
<dbReference type="PROSITE" id="PS51706">
    <property type="entry name" value="G_ENGB"/>
    <property type="match status" value="1"/>
</dbReference>
<gene>
    <name evidence="1" type="primary">engB</name>
    <name type="ordered locus">SAOUHSC_01777</name>
</gene>